<keyword id="KW-0056">Arginine metabolism</keyword>
<keyword id="KW-0963">Cytoplasm</keyword>
<keyword id="KW-0808">Transferase</keyword>
<name>OTCC_STRAG</name>
<sequence length="337" mass="38047">MTQVFQGRSFLAEKDFSREEFEYLIDFSAHLKDLKKRGVPHHYLEGKNIALLFEKTSTRTRAAFTTAAIDLGAHPEYLGANDIQLGKKESTEDTAKVLGRMFDGIEFRGFSQRMVEELAEFSGVPVWNGLTDEWHPTQMLADYLTIKENFGKLEGITLVYCGDGRNNVANSLLVAGTLMGVNVHIFSPKELFPAEEIVKLAEGYAKESGAHVLVTDNVDEAVKGADVFYTDVWVSMGEEDKFKERVELLQPYQVNMELIKKANNDNLIFLHCLPAFHDTNTVYGKDVAEKFGVKEMEVTDEVFRSKYARHFDQAENRMHTIKAVMAATLGNLFIPKV</sequence>
<protein>
    <recommendedName>
        <fullName>Ornithine carbamoyltransferase, catabolic</fullName>
        <shortName>OTCase</shortName>
        <ecNumber>2.1.3.3</ecNumber>
    </recommendedName>
</protein>
<comment type="function">
    <text evidence="1">Reversibly catalyzes the transfer of the carbamoyl group from carbamoyl phosphate (CP) to the N(epsilon) atom of ornithine (ORN) to produce L-citrulline.</text>
</comment>
<comment type="catalytic activity">
    <reaction>
        <text>carbamoyl phosphate + L-ornithine = L-citrulline + phosphate + H(+)</text>
        <dbReference type="Rhea" id="RHEA:19513"/>
        <dbReference type="ChEBI" id="CHEBI:15378"/>
        <dbReference type="ChEBI" id="CHEBI:43474"/>
        <dbReference type="ChEBI" id="CHEBI:46911"/>
        <dbReference type="ChEBI" id="CHEBI:57743"/>
        <dbReference type="ChEBI" id="CHEBI:58228"/>
        <dbReference type="EC" id="2.1.3.3"/>
    </reaction>
</comment>
<comment type="pathway">
    <text>Amino-acid degradation; L-arginine degradation via ADI pathway; carbamoyl phosphate from L-arginine: step 2/2.</text>
</comment>
<comment type="subcellular location">
    <subcellularLocation>
        <location evidence="1">Cytoplasm</location>
    </subcellularLocation>
</comment>
<comment type="similarity">
    <text evidence="3">Belongs to the aspartate/ornithine carbamoyltransferase superfamily. OTCase family.</text>
</comment>
<feature type="chain" id="PRO_0000113029" description="Ornithine carbamoyltransferase, catabolic">
    <location>
        <begin position="1"/>
        <end position="337"/>
    </location>
</feature>
<feature type="binding site" evidence="2">
    <location>
        <begin position="57"/>
        <end position="60"/>
    </location>
    <ligand>
        <name>carbamoyl phosphate</name>
        <dbReference type="ChEBI" id="CHEBI:58228"/>
    </ligand>
</feature>
<feature type="binding site" evidence="2">
    <location>
        <position position="84"/>
    </location>
    <ligand>
        <name>carbamoyl phosphate</name>
        <dbReference type="ChEBI" id="CHEBI:58228"/>
    </ligand>
</feature>
<feature type="binding site" evidence="2">
    <location>
        <position position="108"/>
    </location>
    <ligand>
        <name>carbamoyl phosphate</name>
        <dbReference type="ChEBI" id="CHEBI:58228"/>
    </ligand>
</feature>
<feature type="binding site" evidence="2">
    <location>
        <begin position="135"/>
        <end position="138"/>
    </location>
    <ligand>
        <name>carbamoyl phosphate</name>
        <dbReference type="ChEBI" id="CHEBI:58228"/>
    </ligand>
</feature>
<feature type="binding site" evidence="2">
    <location>
        <position position="167"/>
    </location>
    <ligand>
        <name>L-ornithine</name>
        <dbReference type="ChEBI" id="CHEBI:46911"/>
    </ligand>
</feature>
<feature type="binding site" evidence="2">
    <location>
        <position position="231"/>
    </location>
    <ligand>
        <name>L-ornithine</name>
        <dbReference type="ChEBI" id="CHEBI:46911"/>
    </ligand>
</feature>
<feature type="binding site" evidence="2">
    <location>
        <begin position="235"/>
        <end position="236"/>
    </location>
    <ligand>
        <name>L-ornithine</name>
        <dbReference type="ChEBI" id="CHEBI:46911"/>
    </ligand>
</feature>
<feature type="binding site" evidence="2">
    <location>
        <begin position="272"/>
        <end position="273"/>
    </location>
    <ligand>
        <name>carbamoyl phosphate</name>
        <dbReference type="ChEBI" id="CHEBI:58228"/>
    </ligand>
</feature>
<feature type="binding site" evidence="2">
    <location>
        <position position="317"/>
    </location>
    <ligand>
        <name>carbamoyl phosphate</name>
        <dbReference type="ChEBI" id="CHEBI:58228"/>
    </ligand>
</feature>
<accession>Q8RP83</accession>
<organism>
    <name type="scientific">Streptococcus agalactiae</name>
    <dbReference type="NCBI Taxonomy" id="1311"/>
    <lineage>
        <taxon>Bacteria</taxon>
        <taxon>Bacillati</taxon>
        <taxon>Bacillota</taxon>
        <taxon>Bacilli</taxon>
        <taxon>Lactobacillales</taxon>
        <taxon>Streptococcaceae</taxon>
        <taxon>Streptococcus</taxon>
    </lineage>
</organism>
<gene>
    <name type="primary">arcB</name>
</gene>
<evidence type="ECO:0000250" key="1"/>
<evidence type="ECO:0000255" key="2">
    <source>
        <dbReference type="HAMAP-Rule" id="MF_01109"/>
    </source>
</evidence>
<evidence type="ECO:0000305" key="3"/>
<proteinExistence type="inferred from homology"/>
<dbReference type="EC" id="2.1.3.3"/>
<dbReference type="EMBL" id="AF439647">
    <property type="protein sequence ID" value="AAL85686.1"/>
    <property type="molecule type" value="Genomic_DNA"/>
</dbReference>
<dbReference type="SMR" id="Q8RP83"/>
<dbReference type="PATRIC" id="fig|1311.181.peg.1256"/>
<dbReference type="UniPathway" id="UPA00254">
    <property type="reaction ID" value="UER00365"/>
</dbReference>
<dbReference type="GO" id="GO:0005737">
    <property type="term" value="C:cytoplasm"/>
    <property type="evidence" value="ECO:0007669"/>
    <property type="project" value="UniProtKB-SubCell"/>
</dbReference>
<dbReference type="GO" id="GO:0016597">
    <property type="term" value="F:amino acid binding"/>
    <property type="evidence" value="ECO:0007669"/>
    <property type="project" value="InterPro"/>
</dbReference>
<dbReference type="GO" id="GO:0004585">
    <property type="term" value="F:ornithine carbamoyltransferase activity"/>
    <property type="evidence" value="ECO:0007669"/>
    <property type="project" value="UniProtKB-UniRule"/>
</dbReference>
<dbReference type="GO" id="GO:0042450">
    <property type="term" value="P:arginine biosynthetic process via ornithine"/>
    <property type="evidence" value="ECO:0007669"/>
    <property type="project" value="TreeGrafter"/>
</dbReference>
<dbReference type="GO" id="GO:0019547">
    <property type="term" value="P:arginine catabolic process to ornithine"/>
    <property type="evidence" value="ECO:0007669"/>
    <property type="project" value="UniProtKB-UniPathway"/>
</dbReference>
<dbReference type="GO" id="GO:0019240">
    <property type="term" value="P:citrulline biosynthetic process"/>
    <property type="evidence" value="ECO:0007669"/>
    <property type="project" value="TreeGrafter"/>
</dbReference>
<dbReference type="FunFam" id="3.40.50.1370:FF:000004">
    <property type="entry name" value="Ornithine carbamoyltransferase"/>
    <property type="match status" value="1"/>
</dbReference>
<dbReference type="Gene3D" id="3.40.50.1370">
    <property type="entry name" value="Aspartate/ornithine carbamoyltransferase"/>
    <property type="match status" value="2"/>
</dbReference>
<dbReference type="HAMAP" id="MF_01109">
    <property type="entry name" value="OTCase"/>
    <property type="match status" value="1"/>
</dbReference>
<dbReference type="InterPro" id="IPR006132">
    <property type="entry name" value="Asp/Orn_carbamoyltranf_P-bd"/>
</dbReference>
<dbReference type="InterPro" id="IPR006130">
    <property type="entry name" value="Asp/Orn_carbamoylTrfase"/>
</dbReference>
<dbReference type="InterPro" id="IPR036901">
    <property type="entry name" value="Asp/Orn_carbamoylTrfase_sf"/>
</dbReference>
<dbReference type="InterPro" id="IPR006131">
    <property type="entry name" value="Asp_carbamoyltransf_Asp/Orn-bd"/>
</dbReference>
<dbReference type="InterPro" id="IPR002292">
    <property type="entry name" value="Orn/put_carbamltrans"/>
</dbReference>
<dbReference type="InterPro" id="IPR024904">
    <property type="entry name" value="OTCase_ArgI"/>
</dbReference>
<dbReference type="NCBIfam" id="TIGR00658">
    <property type="entry name" value="orni_carb_tr"/>
    <property type="match status" value="1"/>
</dbReference>
<dbReference type="NCBIfam" id="NF001986">
    <property type="entry name" value="PRK00779.1"/>
    <property type="match status" value="1"/>
</dbReference>
<dbReference type="PANTHER" id="PTHR45753:SF1">
    <property type="entry name" value="ORNITHINE CARBAMOYLTRANSFERASE, CATABOLIC"/>
    <property type="match status" value="1"/>
</dbReference>
<dbReference type="PANTHER" id="PTHR45753">
    <property type="entry name" value="ORNITHINE CARBAMOYLTRANSFERASE, MITOCHONDRIAL"/>
    <property type="match status" value="1"/>
</dbReference>
<dbReference type="Pfam" id="PF00185">
    <property type="entry name" value="OTCace"/>
    <property type="match status" value="1"/>
</dbReference>
<dbReference type="Pfam" id="PF02729">
    <property type="entry name" value="OTCace_N"/>
    <property type="match status" value="1"/>
</dbReference>
<dbReference type="PRINTS" id="PR00100">
    <property type="entry name" value="AOTCASE"/>
</dbReference>
<dbReference type="PRINTS" id="PR00102">
    <property type="entry name" value="OTCASE"/>
</dbReference>
<dbReference type="SUPFAM" id="SSF53671">
    <property type="entry name" value="Aspartate/ornithine carbamoyltransferase"/>
    <property type="match status" value="1"/>
</dbReference>
<dbReference type="PROSITE" id="PS00097">
    <property type="entry name" value="CARBAMOYLTRANSFERASE"/>
    <property type="match status" value="1"/>
</dbReference>
<reference key="1">
    <citation type="journal article" date="2002" name="Infect. Immun.">
        <title>Identification of major outer surface proteins of Streptococcus agalactiae.</title>
        <authorList>
            <person name="Hughes M.J."/>
            <person name="Moore J.C."/>
            <person name="Lane J.D."/>
            <person name="Wilson R."/>
            <person name="Pribul P.K."/>
            <person name="Younes Z.N."/>
            <person name="Dobson R.J."/>
            <person name="Everest P."/>
            <person name="Reason A.J."/>
            <person name="Redfern J.M."/>
            <person name="Greer F.M."/>
            <person name="Paxton T."/>
            <person name="Panico M."/>
            <person name="Morris H.R."/>
            <person name="Feldman R.G."/>
            <person name="Santangelo J.D."/>
        </authorList>
    </citation>
    <scope>NUCLEOTIDE SEQUENCE [GENOMIC DNA]</scope>
</reference>